<accession>O04796</accession>
<dbReference type="EC" id="1.11.1.7"/>
<dbReference type="EMBL" id="Z84473">
    <property type="protein sequence ID" value="CAB06478.1"/>
    <property type="molecule type" value="mRNA"/>
</dbReference>
<dbReference type="PIR" id="T10946">
    <property type="entry name" value="T10946"/>
</dbReference>
<dbReference type="SMR" id="O04796"/>
<dbReference type="PeroxiBase" id="65">
    <property type="entry name" value="IbPrx09"/>
</dbReference>
<dbReference type="GO" id="GO:0005576">
    <property type="term" value="C:extracellular region"/>
    <property type="evidence" value="ECO:0007669"/>
    <property type="project" value="UniProtKB-SubCell"/>
</dbReference>
<dbReference type="GO" id="GO:0020037">
    <property type="term" value="F:heme binding"/>
    <property type="evidence" value="ECO:0007669"/>
    <property type="project" value="InterPro"/>
</dbReference>
<dbReference type="GO" id="GO:0140825">
    <property type="term" value="F:lactoperoxidase activity"/>
    <property type="evidence" value="ECO:0007669"/>
    <property type="project" value="UniProtKB-EC"/>
</dbReference>
<dbReference type="GO" id="GO:0046872">
    <property type="term" value="F:metal ion binding"/>
    <property type="evidence" value="ECO:0007669"/>
    <property type="project" value="UniProtKB-KW"/>
</dbReference>
<dbReference type="GO" id="GO:0042744">
    <property type="term" value="P:hydrogen peroxide catabolic process"/>
    <property type="evidence" value="ECO:0007669"/>
    <property type="project" value="UniProtKB-KW"/>
</dbReference>
<dbReference type="GO" id="GO:0006979">
    <property type="term" value="P:response to oxidative stress"/>
    <property type="evidence" value="ECO:0007669"/>
    <property type="project" value="InterPro"/>
</dbReference>
<dbReference type="CDD" id="cd00693">
    <property type="entry name" value="secretory_peroxidase"/>
    <property type="match status" value="1"/>
</dbReference>
<dbReference type="FunFam" id="1.10.420.10:FF:000001">
    <property type="entry name" value="Peroxidase"/>
    <property type="match status" value="1"/>
</dbReference>
<dbReference type="Gene3D" id="1.10.520.10">
    <property type="match status" value="1"/>
</dbReference>
<dbReference type="Gene3D" id="1.10.420.10">
    <property type="entry name" value="Peroxidase, domain 2"/>
    <property type="match status" value="1"/>
</dbReference>
<dbReference type="InterPro" id="IPR002016">
    <property type="entry name" value="Haem_peroxidase"/>
</dbReference>
<dbReference type="InterPro" id="IPR010255">
    <property type="entry name" value="Haem_peroxidase_sf"/>
</dbReference>
<dbReference type="InterPro" id="IPR000823">
    <property type="entry name" value="Peroxidase_pln"/>
</dbReference>
<dbReference type="InterPro" id="IPR019794">
    <property type="entry name" value="Peroxidases_AS"/>
</dbReference>
<dbReference type="InterPro" id="IPR019793">
    <property type="entry name" value="Peroxidases_heam-ligand_BS"/>
</dbReference>
<dbReference type="InterPro" id="IPR033905">
    <property type="entry name" value="Secretory_peroxidase"/>
</dbReference>
<dbReference type="PANTHER" id="PTHR31388:SF264">
    <property type="entry name" value="PEROXIDASE 59"/>
    <property type="match status" value="1"/>
</dbReference>
<dbReference type="PANTHER" id="PTHR31388">
    <property type="entry name" value="PEROXIDASE 72-RELATED"/>
    <property type="match status" value="1"/>
</dbReference>
<dbReference type="Pfam" id="PF00141">
    <property type="entry name" value="peroxidase"/>
    <property type="match status" value="1"/>
</dbReference>
<dbReference type="PRINTS" id="PR00458">
    <property type="entry name" value="PEROXIDASE"/>
</dbReference>
<dbReference type="PRINTS" id="PR00461">
    <property type="entry name" value="PLPEROXIDASE"/>
</dbReference>
<dbReference type="SUPFAM" id="SSF48113">
    <property type="entry name" value="Heme-dependent peroxidases"/>
    <property type="match status" value="1"/>
</dbReference>
<dbReference type="PROSITE" id="PS00435">
    <property type="entry name" value="PEROXIDASE_1"/>
    <property type="match status" value="1"/>
</dbReference>
<dbReference type="PROSITE" id="PS00436">
    <property type="entry name" value="PEROXIDASE_2"/>
    <property type="match status" value="1"/>
</dbReference>
<dbReference type="PROSITE" id="PS50873">
    <property type="entry name" value="PEROXIDASE_4"/>
    <property type="match status" value="1"/>
</dbReference>
<keyword id="KW-0106">Calcium</keyword>
<keyword id="KW-0903">Direct protein sequencing</keyword>
<keyword id="KW-1015">Disulfide bond</keyword>
<keyword id="KW-0325">Glycoprotein</keyword>
<keyword id="KW-0349">Heme</keyword>
<keyword id="KW-0376">Hydrogen peroxide</keyword>
<keyword id="KW-0408">Iron</keyword>
<keyword id="KW-0479">Metal-binding</keyword>
<keyword id="KW-0560">Oxidoreductase</keyword>
<keyword id="KW-0575">Peroxidase</keyword>
<keyword id="KW-0964">Secreted</keyword>
<keyword id="KW-0732">Signal</keyword>
<evidence type="ECO:0000255" key="1"/>
<evidence type="ECO:0000255" key="2">
    <source>
        <dbReference type="PROSITE-ProRule" id="PRU00297"/>
    </source>
</evidence>
<evidence type="ECO:0000255" key="3">
    <source>
        <dbReference type="PROSITE-ProRule" id="PRU10012"/>
    </source>
</evidence>
<evidence type="ECO:0000269" key="4">
    <source>
    </source>
</evidence>
<sequence length="348" mass="37186">MASFVARLTLALSFIALALAGYSLVQNTLSSPTHTRLNLIPTWLDSTFDSADVLSYLGFGKSSGRLSDSNCVFSAVKEIVDAAITAETRMGASLIRLHFHDCFVDGCDGGILLNDTANFTGEQGAPANSNSVRGFSVIDQAKRNAQTKCADTPVSCADVLAIAARDAFRKFTNQTYNITLGRQDARTANLTGANTQLPAPFDNLSIQTAKFADKGFNQREMVVLAGAHTVGFSRCAVLCTSTNLNQNRSATLQCTCPASANDTGLVGLDPSPGTFDKKYFEELVKGQGLLFSDQELMQSNATVTAVRRYRDATGAFLTDFAAAMVKMSNLPPSAGVQLEIRNVCSRVN</sequence>
<comment type="function">
    <text>Removal of H(2)O(2), oxidation of toxic reductants, biosynthesis and degradation of lignin, suberization, auxin catabolism, response to environmental stresses such as wounding, pathogen attack and oxidative stress. These functions might be dependent on each isozyme/isoform in each plant tissue.</text>
</comment>
<comment type="function">
    <text>May contribute to protection against cold-induced oxidative stress.</text>
</comment>
<comment type="catalytic activity">
    <reaction>
        <text>2 a phenolic donor + H2O2 = 2 a phenolic radical donor + 2 H2O</text>
        <dbReference type="Rhea" id="RHEA:56136"/>
        <dbReference type="ChEBI" id="CHEBI:15377"/>
        <dbReference type="ChEBI" id="CHEBI:16240"/>
        <dbReference type="ChEBI" id="CHEBI:139520"/>
        <dbReference type="ChEBI" id="CHEBI:139521"/>
        <dbReference type="EC" id="1.11.1.7"/>
    </reaction>
</comment>
<comment type="cofactor">
    <cofactor>
        <name>Ca(2+)</name>
        <dbReference type="ChEBI" id="CHEBI:29108"/>
    </cofactor>
    <text>Binds 2 calcium ions per subunit.</text>
</comment>
<comment type="cofactor">
    <cofactor>
        <name>heme b</name>
        <dbReference type="ChEBI" id="CHEBI:60344"/>
    </cofactor>
    <text>Binds 1 heme b (iron(II)-protoporphyrin IX) group per subunit.</text>
</comment>
<comment type="subcellular location">
    <subcellularLocation>
        <location evidence="2">Secreted</location>
    </subcellularLocation>
</comment>
<comment type="tissue specificity">
    <text>Highly expressed in suspension cultured cells. Weak expression also found in the stems of intact plants. No expression in leaf, tuberous root and non-tuberous root.</text>
</comment>
<comment type="developmental stage">
    <text>Very low expression level 0.5 days after subculture (DAS).</text>
</comment>
<comment type="induction">
    <text>By wounding and cold stress. Induced by acclimation and repressed by chilling.</text>
</comment>
<comment type="similarity">
    <text evidence="2">Belongs to the peroxidase family. Classical plant (class III) peroxidase subfamily.</text>
</comment>
<reference key="1">
    <citation type="journal article" date="1997" name="Mol. Gen. Genet.">
        <title>Molecular cloning and characterization of cDNAs for anionic and neutral peroxidases from suspension-cultured cells of sweet potato and their differential expression in response to stress.</title>
        <authorList>
            <person name="Huh G.-H."/>
            <person name="Lee S.-J."/>
            <person name="Bae Y.-S."/>
            <person name="Liu J.R."/>
            <person name="Kwak S.-S."/>
        </authorList>
    </citation>
    <scope>NUCLEOTIDE SEQUENCE [MRNA]</scope>
    <scope>CHARACTERIZATION</scope>
    <scope>PROTEIN SEQUENCE OF 68-80</scope>
    <source>
        <strain>cv. White Star</strain>
    </source>
</reference>
<protein>
    <recommendedName>
        <fullName>Neutral peroxidase</fullName>
        <ecNumber>1.11.1.7</ecNumber>
    </recommendedName>
    <alternativeName>
        <fullName>SwPN1</fullName>
    </alternativeName>
</protein>
<organism>
    <name type="scientific">Ipomoea batatas</name>
    <name type="common">Sweet potato</name>
    <name type="synonym">Convolvulus batatas</name>
    <dbReference type="NCBI Taxonomy" id="4120"/>
    <lineage>
        <taxon>Eukaryota</taxon>
        <taxon>Viridiplantae</taxon>
        <taxon>Streptophyta</taxon>
        <taxon>Embryophyta</taxon>
        <taxon>Tracheophyta</taxon>
        <taxon>Spermatophyta</taxon>
        <taxon>Magnoliopsida</taxon>
        <taxon>eudicotyledons</taxon>
        <taxon>Gunneridae</taxon>
        <taxon>Pentapetalae</taxon>
        <taxon>asterids</taxon>
        <taxon>lamiids</taxon>
        <taxon>Solanales</taxon>
        <taxon>Convolvulaceae</taxon>
        <taxon>Ipomoeeae</taxon>
        <taxon>Ipomoea</taxon>
    </lineage>
</organism>
<name>PERN_IPOBA</name>
<proteinExistence type="evidence at protein level"/>
<feature type="signal peptide" evidence="1">
    <location>
        <begin position="1"/>
        <end position="20"/>
    </location>
</feature>
<feature type="propeptide" id="PRO_0000023751" evidence="4">
    <location>
        <begin position="21"/>
        <end position="67"/>
    </location>
</feature>
<feature type="chain" id="PRO_0000023752" description="Neutral peroxidase">
    <location>
        <begin position="68"/>
        <end position="348"/>
    </location>
</feature>
<feature type="active site" description="Proton acceptor" evidence="2 3">
    <location>
        <position position="100"/>
    </location>
</feature>
<feature type="binding site" evidence="2">
    <location>
        <position position="101"/>
    </location>
    <ligand>
        <name>Ca(2+)</name>
        <dbReference type="ChEBI" id="CHEBI:29108"/>
        <label>1</label>
    </ligand>
</feature>
<feature type="binding site" evidence="2">
    <location>
        <position position="104"/>
    </location>
    <ligand>
        <name>Ca(2+)</name>
        <dbReference type="ChEBI" id="CHEBI:29108"/>
        <label>1</label>
    </ligand>
</feature>
<feature type="binding site" evidence="2">
    <location>
        <position position="106"/>
    </location>
    <ligand>
        <name>Ca(2+)</name>
        <dbReference type="ChEBI" id="CHEBI:29108"/>
        <label>1</label>
    </ligand>
</feature>
<feature type="binding site" evidence="2">
    <location>
        <position position="108"/>
    </location>
    <ligand>
        <name>Ca(2+)</name>
        <dbReference type="ChEBI" id="CHEBI:29108"/>
        <label>1</label>
    </ligand>
</feature>
<feature type="binding site" evidence="2">
    <location>
        <position position="198"/>
    </location>
    <ligand>
        <name>substrate</name>
    </ligand>
</feature>
<feature type="binding site" description="axial binding residue" evidence="2">
    <location>
        <position position="228"/>
    </location>
    <ligand>
        <name>heme b</name>
        <dbReference type="ChEBI" id="CHEBI:60344"/>
    </ligand>
    <ligandPart>
        <name>Fe</name>
        <dbReference type="ChEBI" id="CHEBI:18248"/>
    </ligandPart>
</feature>
<feature type="binding site" evidence="2">
    <location>
        <position position="229"/>
    </location>
    <ligand>
        <name>Ca(2+)</name>
        <dbReference type="ChEBI" id="CHEBI:29108"/>
        <label>2</label>
    </ligand>
</feature>
<feature type="binding site" evidence="2">
    <location>
        <position position="269"/>
    </location>
    <ligand>
        <name>Ca(2+)</name>
        <dbReference type="ChEBI" id="CHEBI:29108"/>
        <label>2</label>
    </ligand>
</feature>
<feature type="binding site" evidence="2">
    <location>
        <position position="271"/>
    </location>
    <ligand>
        <name>Ca(2+)</name>
        <dbReference type="ChEBI" id="CHEBI:29108"/>
        <label>2</label>
    </ligand>
</feature>
<feature type="binding site" evidence="2">
    <location>
        <position position="276"/>
    </location>
    <ligand>
        <name>Ca(2+)</name>
        <dbReference type="ChEBI" id="CHEBI:29108"/>
        <label>2</label>
    </ligand>
</feature>
<feature type="site" description="Transition state stabilizer" evidence="2">
    <location>
        <position position="96"/>
    </location>
</feature>
<feature type="glycosylation site" description="N-linked (GlcNAc...) asparagine" evidence="1">
    <location>
        <position position="114"/>
    </location>
</feature>
<feature type="glycosylation site" description="N-linked (GlcNAc...) asparagine" evidence="1">
    <location>
        <position position="118"/>
    </location>
</feature>
<feature type="glycosylation site" description="N-linked (GlcNAc...) asparagine" evidence="1">
    <location>
        <position position="173"/>
    </location>
</feature>
<feature type="glycosylation site" description="N-linked (GlcNAc...) asparagine" evidence="1">
    <location>
        <position position="177"/>
    </location>
</feature>
<feature type="glycosylation site" description="N-linked (GlcNAc...) asparagine" evidence="1">
    <location>
        <position position="189"/>
    </location>
</feature>
<feature type="glycosylation site" description="N-linked (GlcNAc...) asparagine" evidence="1">
    <location>
        <position position="203"/>
    </location>
</feature>
<feature type="glycosylation site" description="N-linked (GlcNAc...) asparagine" evidence="1">
    <location>
        <position position="247"/>
    </location>
</feature>
<feature type="glycosylation site" description="N-linked (GlcNAc...) asparagine" evidence="1">
    <location>
        <position position="261"/>
    </location>
</feature>
<feature type="glycosylation site" description="N-linked (GlcNAc...) asparagine" evidence="1">
    <location>
        <position position="300"/>
    </location>
</feature>
<feature type="disulfide bond" evidence="2">
    <location>
        <begin position="71"/>
        <end position="149"/>
    </location>
</feature>
<feature type="disulfide bond" evidence="2">
    <location>
        <begin position="102"/>
        <end position="107"/>
    </location>
</feature>
<feature type="disulfide bond" evidence="2">
    <location>
        <begin position="156"/>
        <end position="344"/>
    </location>
</feature>
<feature type="disulfide bond" evidence="2">
    <location>
        <begin position="235"/>
        <end position="256"/>
    </location>
</feature>